<evidence type="ECO:0000250" key="1"/>
<evidence type="ECO:0000250" key="2">
    <source>
        <dbReference type="UniProtKB" id="P43601"/>
    </source>
</evidence>
<evidence type="ECO:0000256" key="3">
    <source>
        <dbReference type="SAM" id="MobiDB-lite"/>
    </source>
</evidence>
<evidence type="ECO:0000305" key="4"/>
<sequence length="414" mass="45085">MAMNFVTFNQDYSYLAVATSKGFRIFTTDPFAKSYETKEGNIAIIEMLFSTSLVALILSPRRLQITNTKRQSTICELTFPTTVLAVKLNRKRLVIVLEDQIYLYDIQTMKLLYTIETSPNPNAICALSPSSDNCYLAYPLPQKAPPSSFNPPSHAPPGSTHVSPTTGEVLIFDALKLEAINVIEAHRSPLACITLNSDGTLIATASDKGTIIRVFSVPDGHKLYQFRRGSIPSRIYSMSFNTTSTLLCVSSSTETIHLFKLSHQTSSREGSPSSALSRERAASQSSLGTSPDPDDPTDDMESSEIASRKHNGTLMGMIRRTSQNVGSSFAAKVGGYLPKGVSEMWEPARDFAWIKLPKTNQTAGANGNAGSLRSVVAMSNNTPQVMVVTSDGNFYVFNIDLSKGGEGTLTKQYS</sequence>
<reference key="1">
    <citation type="submission" date="2005-09" db="EMBL/GenBank/DDBJ databases">
        <title>Annotation of the Aspergillus terreus NIH2624 genome.</title>
        <authorList>
            <person name="Birren B.W."/>
            <person name="Lander E.S."/>
            <person name="Galagan J.E."/>
            <person name="Nusbaum C."/>
            <person name="Devon K."/>
            <person name="Henn M."/>
            <person name="Ma L.-J."/>
            <person name="Jaffe D.B."/>
            <person name="Butler J."/>
            <person name="Alvarez P."/>
            <person name="Gnerre S."/>
            <person name="Grabherr M."/>
            <person name="Kleber M."/>
            <person name="Mauceli E.W."/>
            <person name="Brockman W."/>
            <person name="Rounsley S."/>
            <person name="Young S.K."/>
            <person name="LaButti K."/>
            <person name="Pushparaj V."/>
            <person name="DeCaprio D."/>
            <person name="Crawford M."/>
            <person name="Koehrsen M."/>
            <person name="Engels R."/>
            <person name="Montgomery P."/>
            <person name="Pearson M."/>
            <person name="Howarth C."/>
            <person name="Larson L."/>
            <person name="Luoma S."/>
            <person name="White J."/>
            <person name="Alvarado L."/>
            <person name="Kodira C.D."/>
            <person name="Zeng Q."/>
            <person name="Oleary S."/>
            <person name="Yandava C."/>
            <person name="Denning D.W."/>
            <person name="Nierman W.C."/>
            <person name="Milne T."/>
            <person name="Madden K."/>
        </authorList>
    </citation>
    <scope>NUCLEOTIDE SEQUENCE [LARGE SCALE GENOMIC DNA]</scope>
    <source>
        <strain>NIH 2624 / FGSC A1156</strain>
    </source>
</reference>
<keyword id="KW-0072">Autophagy</keyword>
<keyword id="KW-0967">Endosome</keyword>
<keyword id="KW-0472">Membrane</keyword>
<keyword id="KW-0653">Protein transport</keyword>
<keyword id="KW-1185">Reference proteome</keyword>
<keyword id="KW-0677">Repeat</keyword>
<keyword id="KW-0813">Transport</keyword>
<keyword id="KW-0926">Vacuole</keyword>
<keyword id="KW-0853">WD repeat</keyword>
<organism>
    <name type="scientific">Aspergillus terreus (strain NIH 2624 / FGSC A1156)</name>
    <dbReference type="NCBI Taxonomy" id="341663"/>
    <lineage>
        <taxon>Eukaryota</taxon>
        <taxon>Fungi</taxon>
        <taxon>Dikarya</taxon>
        <taxon>Ascomycota</taxon>
        <taxon>Pezizomycotina</taxon>
        <taxon>Eurotiomycetes</taxon>
        <taxon>Eurotiomycetidae</taxon>
        <taxon>Eurotiales</taxon>
        <taxon>Aspergillaceae</taxon>
        <taxon>Aspergillus</taxon>
        <taxon>Aspergillus subgen. Circumdati</taxon>
    </lineage>
</organism>
<name>ATG18_ASPTN</name>
<comment type="function">
    <text evidence="1">The PI(3,5)P2 regulatory complex regulates both the synthesis and turnover of phosphatidylinositol 3,5-bisphosphate (PtdIns(3,5)P2). Necessary for proper vacuole morphology. Plays an important role in osmotically-induced vacuole fragmentation. Required for cytoplasm to vacuole transport (Cvt) vesicle formation, pexophagy and starvation-induced autophagy. Involved in correct atg9 trafficking to the pre-autophagosomal structure. Might also be involved in premeiotic DNA replication (By similarity).</text>
</comment>
<comment type="subunit">
    <text evidence="1">Component of the PI(3,5)P2 regulatory complex.</text>
</comment>
<comment type="subcellular location">
    <subcellularLocation>
        <location evidence="1">Preautophagosomal structure membrane</location>
        <topology evidence="1">Peripheral membrane protein</topology>
    </subcellularLocation>
    <subcellularLocation>
        <location evidence="1">Vacuole membrane</location>
        <topology evidence="1">Peripheral membrane protein</topology>
    </subcellularLocation>
    <subcellularLocation>
        <location evidence="1">Endosome membrane</location>
        <topology evidence="1">Peripheral membrane protein</topology>
    </subcellularLocation>
</comment>
<comment type="domain">
    <text evidence="1">The N-terminus might form a beta-propeller domain involved in specific binding to phosphatidylinositol 3,5-bisphosphate (PIP2), leading to the association of the protein to the membrane.</text>
</comment>
<comment type="domain">
    <text evidence="2">The L/FRRG motif is essential for the cytoplasm to vacuole transport (Cvt) pathway, for the recruitment of atg8 and atg16 to the PAS in nutrient-rich medium, and for its recruitment to and dissociation from the PAS under starvation conditions.</text>
</comment>
<comment type="similarity">
    <text evidence="4">Belongs to the WD repeat PROPPIN family.</text>
</comment>
<proteinExistence type="inferred from homology"/>
<gene>
    <name type="primary">atg18</name>
    <name type="ORF">ATEG_02104</name>
</gene>
<accession>Q0CW30</accession>
<protein>
    <recommendedName>
        <fullName>Autophagy-related protein 18</fullName>
    </recommendedName>
</protein>
<feature type="chain" id="PRO_0000317998" description="Autophagy-related protein 18">
    <location>
        <begin position="1"/>
        <end position="414"/>
    </location>
</feature>
<feature type="repeat" description="WD 1">
    <location>
        <begin position="1"/>
        <end position="36"/>
    </location>
</feature>
<feature type="repeat" description="WD 2">
    <location>
        <begin position="69"/>
        <end position="114"/>
    </location>
</feature>
<feature type="repeat" description="WD 3">
    <location>
        <begin position="185"/>
        <end position="225"/>
    </location>
</feature>
<feature type="repeat" description="WD 4">
    <location>
        <begin position="230"/>
        <end position="269"/>
    </location>
</feature>
<feature type="repeat" description="WD 5">
    <location>
        <begin position="309"/>
        <end position="355"/>
    </location>
</feature>
<feature type="repeat" description="WD 6">
    <location>
        <begin position="367"/>
        <end position="407"/>
    </location>
</feature>
<feature type="region of interest" description="Disordered" evidence="3">
    <location>
        <begin position="261"/>
        <end position="314"/>
    </location>
</feature>
<feature type="short sequence motif" description="L/FRRG motif" evidence="2">
    <location>
        <begin position="226"/>
        <end position="230"/>
    </location>
</feature>
<feature type="compositionally biased region" description="Polar residues" evidence="3">
    <location>
        <begin position="262"/>
        <end position="289"/>
    </location>
</feature>
<feature type="compositionally biased region" description="Acidic residues" evidence="3">
    <location>
        <begin position="292"/>
        <end position="302"/>
    </location>
</feature>
<dbReference type="EMBL" id="CH476596">
    <property type="protein sequence ID" value="EAU37066.1"/>
    <property type="molecule type" value="Genomic_DNA"/>
</dbReference>
<dbReference type="RefSeq" id="XP_001211282.1">
    <property type="nucleotide sequence ID" value="XM_001211282.1"/>
</dbReference>
<dbReference type="SMR" id="Q0CW30"/>
<dbReference type="STRING" id="341663.Q0CW30"/>
<dbReference type="EnsemblFungi" id="EAU37066">
    <property type="protein sequence ID" value="EAU37066"/>
    <property type="gene ID" value="ATEG_02104"/>
</dbReference>
<dbReference type="GeneID" id="4316965"/>
<dbReference type="VEuPathDB" id="FungiDB:ATEG_02104"/>
<dbReference type="eggNOG" id="KOG2110">
    <property type="taxonomic scope" value="Eukaryota"/>
</dbReference>
<dbReference type="HOGENOM" id="CLU_025895_5_2_1"/>
<dbReference type="OMA" id="NIAILEM"/>
<dbReference type="OrthoDB" id="1667587at2759"/>
<dbReference type="Proteomes" id="UP000007963">
    <property type="component" value="Unassembled WGS sequence"/>
</dbReference>
<dbReference type="GO" id="GO:0010008">
    <property type="term" value="C:endosome membrane"/>
    <property type="evidence" value="ECO:0007669"/>
    <property type="project" value="UniProtKB-SubCell"/>
</dbReference>
<dbReference type="GO" id="GO:0034045">
    <property type="term" value="C:phagophore assembly site membrane"/>
    <property type="evidence" value="ECO:0007669"/>
    <property type="project" value="UniProtKB-SubCell"/>
</dbReference>
<dbReference type="GO" id="GO:0005774">
    <property type="term" value="C:vacuolar membrane"/>
    <property type="evidence" value="ECO:0007669"/>
    <property type="project" value="UniProtKB-SubCell"/>
</dbReference>
<dbReference type="GO" id="GO:0006914">
    <property type="term" value="P:autophagy"/>
    <property type="evidence" value="ECO:0007669"/>
    <property type="project" value="UniProtKB-KW"/>
</dbReference>
<dbReference type="GO" id="GO:0015031">
    <property type="term" value="P:protein transport"/>
    <property type="evidence" value="ECO:0007669"/>
    <property type="project" value="UniProtKB-KW"/>
</dbReference>
<dbReference type="FunFam" id="2.130.10.10:FF:000965">
    <property type="entry name" value="Autophagy-like protein 18 Atg18"/>
    <property type="match status" value="1"/>
</dbReference>
<dbReference type="Gene3D" id="2.130.10.10">
    <property type="entry name" value="YVTN repeat-like/Quinoprotein amine dehydrogenase"/>
    <property type="match status" value="2"/>
</dbReference>
<dbReference type="InterPro" id="IPR048720">
    <property type="entry name" value="PROPPIN"/>
</dbReference>
<dbReference type="InterPro" id="IPR015943">
    <property type="entry name" value="WD40/YVTN_repeat-like_dom_sf"/>
</dbReference>
<dbReference type="InterPro" id="IPR036322">
    <property type="entry name" value="WD40_repeat_dom_sf"/>
</dbReference>
<dbReference type="InterPro" id="IPR001680">
    <property type="entry name" value="WD40_rpt"/>
</dbReference>
<dbReference type="PANTHER" id="PTHR11227">
    <property type="entry name" value="WD-REPEAT PROTEIN INTERACTING WITH PHOSPHOINOSIDES WIPI -RELATED"/>
    <property type="match status" value="1"/>
</dbReference>
<dbReference type="Pfam" id="PF21032">
    <property type="entry name" value="PROPPIN"/>
    <property type="match status" value="2"/>
</dbReference>
<dbReference type="SMART" id="SM00320">
    <property type="entry name" value="WD40"/>
    <property type="match status" value="3"/>
</dbReference>
<dbReference type="SUPFAM" id="SSF50978">
    <property type="entry name" value="WD40 repeat-like"/>
    <property type="match status" value="1"/>
</dbReference>